<comment type="function">
    <text evidence="1">Nucleoside triphosphate pyrophosphatase that hydrolyzes dTTP and UTP. May have a dual role in cell division arrest and in preventing the incorporation of modified nucleotides into cellular nucleic acids.</text>
</comment>
<comment type="catalytic activity">
    <reaction evidence="1">
        <text>dTTP + H2O = dTMP + diphosphate + H(+)</text>
        <dbReference type="Rhea" id="RHEA:28534"/>
        <dbReference type="ChEBI" id="CHEBI:15377"/>
        <dbReference type="ChEBI" id="CHEBI:15378"/>
        <dbReference type="ChEBI" id="CHEBI:33019"/>
        <dbReference type="ChEBI" id="CHEBI:37568"/>
        <dbReference type="ChEBI" id="CHEBI:63528"/>
        <dbReference type="EC" id="3.6.1.9"/>
    </reaction>
</comment>
<comment type="catalytic activity">
    <reaction evidence="1">
        <text>UTP + H2O = UMP + diphosphate + H(+)</text>
        <dbReference type="Rhea" id="RHEA:29395"/>
        <dbReference type="ChEBI" id="CHEBI:15377"/>
        <dbReference type="ChEBI" id="CHEBI:15378"/>
        <dbReference type="ChEBI" id="CHEBI:33019"/>
        <dbReference type="ChEBI" id="CHEBI:46398"/>
        <dbReference type="ChEBI" id="CHEBI:57865"/>
        <dbReference type="EC" id="3.6.1.9"/>
    </reaction>
</comment>
<comment type="cofactor">
    <cofactor evidence="1">
        <name>a divalent metal cation</name>
        <dbReference type="ChEBI" id="CHEBI:60240"/>
    </cofactor>
</comment>
<comment type="subcellular location">
    <subcellularLocation>
        <location evidence="1">Cytoplasm</location>
    </subcellularLocation>
</comment>
<comment type="similarity">
    <text evidence="1">Belongs to the Maf family. YhdE subfamily.</text>
</comment>
<evidence type="ECO:0000255" key="1">
    <source>
        <dbReference type="HAMAP-Rule" id="MF_00528"/>
    </source>
</evidence>
<keyword id="KW-0963">Cytoplasm</keyword>
<keyword id="KW-0378">Hydrolase</keyword>
<keyword id="KW-0546">Nucleotide metabolism</keyword>
<keyword id="KW-1185">Reference proteome</keyword>
<sequence>MSEFIYLASQSPRRSQLLALLGVRHELLLPDADEDAEALEAVLPNEAPAAYVKRVTQLKLDAALQRLKRRGLPAAPVLCSDTTVALGRKIFGKPTDAADATRMLKELSNTTHRVLTAVALGTARKREQVLCESRVTFSAMSSRQIQTYAASGEPLGKAGAYAVQGRAAAFISHMSGSYSGIMGLPMFETAQLLQSFGFKV</sequence>
<feature type="chain" id="PRO_0000267399" description="dTTP/UTP pyrophosphatase">
    <location>
        <begin position="1"/>
        <end position="200"/>
    </location>
</feature>
<feature type="active site" description="Proton acceptor" evidence="1">
    <location>
        <position position="81"/>
    </location>
</feature>
<feature type="site" description="Important for substrate specificity" evidence="1">
    <location>
        <position position="13"/>
    </location>
</feature>
<feature type="site" description="Important for substrate specificity" evidence="1">
    <location>
        <position position="82"/>
    </location>
</feature>
<feature type="site" description="Important for substrate specificity" evidence="1">
    <location>
        <position position="164"/>
    </location>
</feature>
<proteinExistence type="inferred from homology"/>
<reference key="1">
    <citation type="submission" date="2006-02" db="EMBL/GenBank/DDBJ databases">
        <title>Complete sequence of chromosome of Rhodoferax ferrireducens DSM 15236.</title>
        <authorList>
            <person name="Copeland A."/>
            <person name="Lucas S."/>
            <person name="Lapidus A."/>
            <person name="Barry K."/>
            <person name="Detter J.C."/>
            <person name="Glavina del Rio T."/>
            <person name="Hammon N."/>
            <person name="Israni S."/>
            <person name="Pitluck S."/>
            <person name="Brettin T."/>
            <person name="Bruce D."/>
            <person name="Han C."/>
            <person name="Tapia R."/>
            <person name="Gilna P."/>
            <person name="Kiss H."/>
            <person name="Schmutz J."/>
            <person name="Larimer F."/>
            <person name="Land M."/>
            <person name="Kyrpides N."/>
            <person name="Ivanova N."/>
            <person name="Richardson P."/>
        </authorList>
    </citation>
    <scope>NUCLEOTIDE SEQUENCE [LARGE SCALE GENOMIC DNA]</scope>
    <source>
        <strain>ATCC BAA-621 / DSM 15236 / T118</strain>
    </source>
</reference>
<dbReference type="EC" id="3.6.1.9" evidence="1"/>
<dbReference type="EMBL" id="CP000267">
    <property type="protein sequence ID" value="ABD69806.1"/>
    <property type="molecule type" value="Genomic_DNA"/>
</dbReference>
<dbReference type="RefSeq" id="WP_011464374.1">
    <property type="nucleotide sequence ID" value="NC_007908.1"/>
</dbReference>
<dbReference type="SMR" id="Q21WP7"/>
<dbReference type="STRING" id="338969.Rfer_2081"/>
<dbReference type="KEGG" id="rfr:Rfer_2081"/>
<dbReference type="eggNOG" id="COG0424">
    <property type="taxonomic scope" value="Bacteria"/>
</dbReference>
<dbReference type="HOGENOM" id="CLU_040416_2_1_4"/>
<dbReference type="OrthoDB" id="9807767at2"/>
<dbReference type="Proteomes" id="UP000008332">
    <property type="component" value="Chromosome"/>
</dbReference>
<dbReference type="GO" id="GO:0005737">
    <property type="term" value="C:cytoplasm"/>
    <property type="evidence" value="ECO:0007669"/>
    <property type="project" value="UniProtKB-SubCell"/>
</dbReference>
<dbReference type="GO" id="GO:0036218">
    <property type="term" value="F:dTTP diphosphatase activity"/>
    <property type="evidence" value="ECO:0007669"/>
    <property type="project" value="RHEA"/>
</dbReference>
<dbReference type="GO" id="GO:0008324">
    <property type="term" value="F:monoatomic cation transmembrane transporter activity"/>
    <property type="evidence" value="ECO:0007669"/>
    <property type="project" value="InterPro"/>
</dbReference>
<dbReference type="GO" id="GO:0036221">
    <property type="term" value="F:UTP diphosphatase activity"/>
    <property type="evidence" value="ECO:0007669"/>
    <property type="project" value="RHEA"/>
</dbReference>
<dbReference type="GO" id="GO:0009117">
    <property type="term" value="P:nucleotide metabolic process"/>
    <property type="evidence" value="ECO:0007669"/>
    <property type="project" value="UniProtKB-KW"/>
</dbReference>
<dbReference type="GO" id="GO:0006813">
    <property type="term" value="P:potassium ion transport"/>
    <property type="evidence" value="ECO:0007669"/>
    <property type="project" value="InterPro"/>
</dbReference>
<dbReference type="CDD" id="cd00555">
    <property type="entry name" value="Maf"/>
    <property type="match status" value="1"/>
</dbReference>
<dbReference type="Gene3D" id="3.90.950.10">
    <property type="match status" value="1"/>
</dbReference>
<dbReference type="HAMAP" id="MF_00528">
    <property type="entry name" value="Maf"/>
    <property type="match status" value="1"/>
</dbReference>
<dbReference type="InterPro" id="IPR029001">
    <property type="entry name" value="ITPase-like_fam"/>
</dbReference>
<dbReference type="InterPro" id="IPR003697">
    <property type="entry name" value="Maf-like"/>
</dbReference>
<dbReference type="InterPro" id="IPR006037">
    <property type="entry name" value="RCK_C"/>
</dbReference>
<dbReference type="NCBIfam" id="TIGR00172">
    <property type="entry name" value="maf"/>
    <property type="match status" value="1"/>
</dbReference>
<dbReference type="PANTHER" id="PTHR43213">
    <property type="entry name" value="BIFUNCTIONAL DTTP/UTP PYROPHOSPHATASE/METHYLTRANSFERASE PROTEIN-RELATED"/>
    <property type="match status" value="1"/>
</dbReference>
<dbReference type="PANTHER" id="PTHR43213:SF5">
    <property type="entry name" value="BIFUNCTIONAL DTTP_UTP PYROPHOSPHATASE_METHYLTRANSFERASE PROTEIN-RELATED"/>
    <property type="match status" value="1"/>
</dbReference>
<dbReference type="Pfam" id="PF02545">
    <property type="entry name" value="Maf"/>
    <property type="match status" value="1"/>
</dbReference>
<dbReference type="PIRSF" id="PIRSF006305">
    <property type="entry name" value="Maf"/>
    <property type="match status" value="1"/>
</dbReference>
<dbReference type="SUPFAM" id="SSF52972">
    <property type="entry name" value="ITPase-like"/>
    <property type="match status" value="1"/>
</dbReference>
<name>NTPPA_ALBFT</name>
<organism>
    <name type="scientific">Albidiferax ferrireducens (strain ATCC BAA-621 / DSM 15236 / T118)</name>
    <name type="common">Rhodoferax ferrireducens</name>
    <dbReference type="NCBI Taxonomy" id="338969"/>
    <lineage>
        <taxon>Bacteria</taxon>
        <taxon>Pseudomonadati</taxon>
        <taxon>Pseudomonadota</taxon>
        <taxon>Betaproteobacteria</taxon>
        <taxon>Burkholderiales</taxon>
        <taxon>Comamonadaceae</taxon>
        <taxon>Rhodoferax</taxon>
    </lineage>
</organism>
<gene>
    <name type="ordered locus">Rfer_2081</name>
</gene>
<protein>
    <recommendedName>
        <fullName evidence="1">dTTP/UTP pyrophosphatase</fullName>
        <shortName evidence="1">dTTPase/UTPase</shortName>
        <ecNumber evidence="1">3.6.1.9</ecNumber>
    </recommendedName>
    <alternativeName>
        <fullName evidence="1">Nucleoside triphosphate pyrophosphatase</fullName>
    </alternativeName>
    <alternativeName>
        <fullName evidence="1">Nucleotide pyrophosphatase</fullName>
        <shortName evidence="1">Nucleotide PPase</shortName>
    </alternativeName>
</protein>
<accession>Q21WP7</accession>